<reference key="1">
    <citation type="journal article" date="2004" name="Proc. Natl. Acad. Sci. U.S.A.">
        <title>Genome sequence of the enterobacterial phytopathogen Erwinia carotovora subsp. atroseptica and characterization of virulence factors.</title>
        <authorList>
            <person name="Bell K.S."/>
            <person name="Sebaihia M."/>
            <person name="Pritchard L."/>
            <person name="Holden M.T.G."/>
            <person name="Hyman L.J."/>
            <person name="Holeva M.C."/>
            <person name="Thomson N.R."/>
            <person name="Bentley S.D."/>
            <person name="Churcher L.J.C."/>
            <person name="Mungall K."/>
            <person name="Atkin R."/>
            <person name="Bason N."/>
            <person name="Brooks K."/>
            <person name="Chillingworth T."/>
            <person name="Clark K."/>
            <person name="Doggett J."/>
            <person name="Fraser A."/>
            <person name="Hance Z."/>
            <person name="Hauser H."/>
            <person name="Jagels K."/>
            <person name="Moule S."/>
            <person name="Norbertczak H."/>
            <person name="Ormond D."/>
            <person name="Price C."/>
            <person name="Quail M.A."/>
            <person name="Sanders M."/>
            <person name="Walker D."/>
            <person name="Whitehead S."/>
            <person name="Salmond G.P.C."/>
            <person name="Birch P.R.J."/>
            <person name="Parkhill J."/>
            <person name="Toth I.K."/>
        </authorList>
    </citation>
    <scope>NUCLEOTIDE SEQUENCE [LARGE SCALE GENOMIC DNA]</scope>
    <source>
        <strain>SCRI 1043 / ATCC BAA-672</strain>
    </source>
</reference>
<keyword id="KW-0963">Cytoplasm</keyword>
<keyword id="KW-0275">Fatty acid biosynthesis</keyword>
<keyword id="KW-0276">Fatty acid metabolism</keyword>
<keyword id="KW-0413">Isomerase</keyword>
<keyword id="KW-0444">Lipid biosynthesis</keyword>
<keyword id="KW-0443">Lipid metabolism</keyword>
<keyword id="KW-0456">Lyase</keyword>
<keyword id="KW-1185">Reference proteome</keyword>
<protein>
    <recommendedName>
        <fullName evidence="1">3-hydroxydecanoyl-[acyl-carrier-protein] dehydratase</fullName>
        <ecNumber evidence="1">4.2.1.59</ecNumber>
    </recommendedName>
    <alternativeName>
        <fullName evidence="1">3-hydroxyacyl-[acyl-carrier-protein] dehydratase FabA</fullName>
    </alternativeName>
    <alternativeName>
        <fullName evidence="1">Beta-hydroxydecanoyl thioester dehydrase</fullName>
    </alternativeName>
    <alternativeName>
        <fullName evidence="1">Trans-2-decenoyl-[acyl-carrier-protein] isomerase</fullName>
        <ecNumber evidence="1">5.3.3.14</ecNumber>
    </alternativeName>
</protein>
<gene>
    <name evidence="1" type="primary">fabA</name>
    <name type="ordered locus">ECA1748</name>
</gene>
<proteinExistence type="inferred from homology"/>
<sequence length="172" mass="18963">MVDKRESYTKEDLLASSRGELFGPQGPQLPAPNMLMMDRVVKMTEDGGKYGKGFVEAELDITPDQWFFGCHFIGDPVMPGCLGLDAMWQLVGFYLGWLGGEGKGRALGVGEVKFSGQVLPTAKKVTYRIHFKRVINRRLVMGIADGEVLVDGQHIYAADELKVGLFKDASSF</sequence>
<feature type="chain" id="PRO_0000091597" description="3-hydroxydecanoyl-[acyl-carrier-protein] dehydratase">
    <location>
        <begin position="1"/>
        <end position="172"/>
    </location>
</feature>
<feature type="active site" evidence="1">
    <location>
        <position position="71"/>
    </location>
</feature>
<evidence type="ECO:0000255" key="1">
    <source>
        <dbReference type="HAMAP-Rule" id="MF_00405"/>
    </source>
</evidence>
<dbReference type="EC" id="4.2.1.59" evidence="1"/>
<dbReference type="EC" id="5.3.3.14" evidence="1"/>
<dbReference type="EMBL" id="BX950851">
    <property type="protein sequence ID" value="CAG74653.1"/>
    <property type="molecule type" value="Genomic_DNA"/>
</dbReference>
<dbReference type="RefSeq" id="WP_011093324.1">
    <property type="nucleotide sequence ID" value="NC_004547.2"/>
</dbReference>
<dbReference type="SMR" id="Q6D6D7"/>
<dbReference type="STRING" id="218491.ECA1748"/>
<dbReference type="GeneID" id="57209539"/>
<dbReference type="KEGG" id="eca:ECA1748"/>
<dbReference type="PATRIC" id="fig|218491.5.peg.1775"/>
<dbReference type="eggNOG" id="COG0764">
    <property type="taxonomic scope" value="Bacteria"/>
</dbReference>
<dbReference type="HOGENOM" id="CLU_097925_0_0_6"/>
<dbReference type="OrthoDB" id="9786735at2"/>
<dbReference type="UniPathway" id="UPA00094"/>
<dbReference type="Proteomes" id="UP000007966">
    <property type="component" value="Chromosome"/>
</dbReference>
<dbReference type="GO" id="GO:0005737">
    <property type="term" value="C:cytoplasm"/>
    <property type="evidence" value="ECO:0007669"/>
    <property type="project" value="UniProtKB-SubCell"/>
</dbReference>
<dbReference type="GO" id="GO:0019171">
    <property type="term" value="F:(3R)-hydroxyacyl-[acyl-carrier-protein] dehydratase activity"/>
    <property type="evidence" value="ECO:0007669"/>
    <property type="project" value="UniProtKB-UniRule"/>
</dbReference>
<dbReference type="GO" id="GO:0034017">
    <property type="term" value="F:trans-2-decenoyl-acyl-carrier-protein isomerase activity"/>
    <property type="evidence" value="ECO:0007669"/>
    <property type="project" value="UniProtKB-UniRule"/>
</dbReference>
<dbReference type="GO" id="GO:0006636">
    <property type="term" value="P:unsaturated fatty acid biosynthetic process"/>
    <property type="evidence" value="ECO:0007669"/>
    <property type="project" value="UniProtKB-UniRule"/>
</dbReference>
<dbReference type="CDD" id="cd01287">
    <property type="entry name" value="FabA"/>
    <property type="match status" value="1"/>
</dbReference>
<dbReference type="FunFam" id="3.10.129.10:FF:000003">
    <property type="entry name" value="3-hydroxydecanoyl-[acyl-carrier-protein] dehydratase"/>
    <property type="match status" value="1"/>
</dbReference>
<dbReference type="Gene3D" id="3.10.129.10">
    <property type="entry name" value="Hotdog Thioesterase"/>
    <property type="match status" value="1"/>
</dbReference>
<dbReference type="HAMAP" id="MF_00405">
    <property type="entry name" value="FabA"/>
    <property type="match status" value="1"/>
</dbReference>
<dbReference type="InterPro" id="IPR010083">
    <property type="entry name" value="FabA"/>
</dbReference>
<dbReference type="InterPro" id="IPR013114">
    <property type="entry name" value="FabA_FabZ"/>
</dbReference>
<dbReference type="InterPro" id="IPR029069">
    <property type="entry name" value="HotDog_dom_sf"/>
</dbReference>
<dbReference type="NCBIfam" id="TIGR01749">
    <property type="entry name" value="fabA"/>
    <property type="match status" value="1"/>
</dbReference>
<dbReference type="NCBIfam" id="NF003509">
    <property type="entry name" value="PRK05174.1"/>
    <property type="match status" value="1"/>
</dbReference>
<dbReference type="PANTHER" id="PTHR30272">
    <property type="entry name" value="3-HYDROXYACYL-[ACYL-CARRIER-PROTEIN] DEHYDRATASE"/>
    <property type="match status" value="1"/>
</dbReference>
<dbReference type="PANTHER" id="PTHR30272:SF8">
    <property type="entry name" value="3-HYDROXYDECANOYL-[ACYL-CARRIER-PROTEIN] DEHYDRATASE"/>
    <property type="match status" value="1"/>
</dbReference>
<dbReference type="Pfam" id="PF07977">
    <property type="entry name" value="FabA"/>
    <property type="match status" value="1"/>
</dbReference>
<dbReference type="SUPFAM" id="SSF54637">
    <property type="entry name" value="Thioesterase/thiol ester dehydrase-isomerase"/>
    <property type="match status" value="1"/>
</dbReference>
<name>FABA_PECAS</name>
<organism>
    <name type="scientific">Pectobacterium atrosepticum (strain SCRI 1043 / ATCC BAA-672)</name>
    <name type="common">Erwinia carotovora subsp. atroseptica</name>
    <dbReference type="NCBI Taxonomy" id="218491"/>
    <lineage>
        <taxon>Bacteria</taxon>
        <taxon>Pseudomonadati</taxon>
        <taxon>Pseudomonadota</taxon>
        <taxon>Gammaproteobacteria</taxon>
        <taxon>Enterobacterales</taxon>
        <taxon>Pectobacteriaceae</taxon>
        <taxon>Pectobacterium</taxon>
    </lineage>
</organism>
<accession>Q6D6D7</accession>
<comment type="function">
    <text evidence="1">Necessary for the introduction of cis unsaturation into fatty acids. Catalyzes the dehydration of (3R)-3-hydroxydecanoyl-ACP to E-(2)-decenoyl-ACP and then its isomerization to Z-(3)-decenoyl-ACP. Can catalyze the dehydratase reaction for beta-hydroxyacyl-ACPs with saturated chain lengths up to 16:0, being most active on intermediate chain length.</text>
</comment>
<comment type="catalytic activity">
    <reaction evidence="1">
        <text>a (3R)-hydroxyacyl-[ACP] = a (2E)-enoyl-[ACP] + H2O</text>
        <dbReference type="Rhea" id="RHEA:13097"/>
        <dbReference type="Rhea" id="RHEA-COMP:9925"/>
        <dbReference type="Rhea" id="RHEA-COMP:9945"/>
        <dbReference type="ChEBI" id="CHEBI:15377"/>
        <dbReference type="ChEBI" id="CHEBI:78784"/>
        <dbReference type="ChEBI" id="CHEBI:78827"/>
        <dbReference type="EC" id="4.2.1.59"/>
    </reaction>
</comment>
<comment type="catalytic activity">
    <reaction evidence="1">
        <text>(3R)-hydroxydecanoyl-[ACP] = (2E)-decenoyl-[ACP] + H2O</text>
        <dbReference type="Rhea" id="RHEA:41860"/>
        <dbReference type="Rhea" id="RHEA-COMP:9638"/>
        <dbReference type="Rhea" id="RHEA-COMP:9639"/>
        <dbReference type="ChEBI" id="CHEBI:15377"/>
        <dbReference type="ChEBI" id="CHEBI:78466"/>
        <dbReference type="ChEBI" id="CHEBI:78467"/>
    </reaction>
</comment>
<comment type="catalytic activity">
    <reaction evidence="1">
        <text>(2E)-decenoyl-[ACP] = (3Z)-decenoyl-[ACP]</text>
        <dbReference type="Rhea" id="RHEA:23568"/>
        <dbReference type="Rhea" id="RHEA-COMP:9639"/>
        <dbReference type="Rhea" id="RHEA-COMP:9927"/>
        <dbReference type="ChEBI" id="CHEBI:78467"/>
        <dbReference type="ChEBI" id="CHEBI:78798"/>
        <dbReference type="EC" id="5.3.3.14"/>
    </reaction>
</comment>
<comment type="pathway">
    <text evidence="1">Lipid metabolism; fatty acid biosynthesis.</text>
</comment>
<comment type="subunit">
    <text evidence="1">Homodimer.</text>
</comment>
<comment type="subcellular location">
    <subcellularLocation>
        <location evidence="1">Cytoplasm</location>
    </subcellularLocation>
</comment>
<comment type="similarity">
    <text evidence="1">Belongs to the thioester dehydratase family. FabA subfamily.</text>
</comment>